<name>NHAB_ECO24</name>
<keyword id="KW-0050">Antiport</keyword>
<keyword id="KW-0997">Cell inner membrane</keyword>
<keyword id="KW-1003">Cell membrane</keyword>
<keyword id="KW-0406">Ion transport</keyword>
<keyword id="KW-0472">Membrane</keyword>
<keyword id="KW-1185">Reference proteome</keyword>
<keyword id="KW-0915">Sodium</keyword>
<keyword id="KW-0739">Sodium transport</keyword>
<keyword id="KW-0812">Transmembrane</keyword>
<keyword id="KW-1133">Transmembrane helix</keyword>
<keyword id="KW-0813">Transport</keyword>
<reference key="1">
    <citation type="journal article" date="2008" name="J. Bacteriol.">
        <title>The pangenome structure of Escherichia coli: comparative genomic analysis of E. coli commensal and pathogenic isolates.</title>
        <authorList>
            <person name="Rasko D.A."/>
            <person name="Rosovitz M.J."/>
            <person name="Myers G.S.A."/>
            <person name="Mongodin E.F."/>
            <person name="Fricke W.F."/>
            <person name="Gajer P."/>
            <person name="Crabtree J."/>
            <person name="Sebaihia M."/>
            <person name="Thomson N.R."/>
            <person name="Chaudhuri R."/>
            <person name="Henderson I.R."/>
            <person name="Sperandio V."/>
            <person name="Ravel J."/>
        </authorList>
    </citation>
    <scope>NUCLEOTIDE SEQUENCE [LARGE SCALE GENOMIC DNA]</scope>
    <source>
        <strain>E24377A / ETEC</strain>
    </source>
</reference>
<protein>
    <recommendedName>
        <fullName evidence="1">Na(+)/H(+) antiporter NhaB</fullName>
    </recommendedName>
    <alternativeName>
        <fullName evidence="1">Sodium/proton antiporter NhaB</fullName>
    </alternativeName>
</protein>
<accession>A7ZKV7</accession>
<evidence type="ECO:0000255" key="1">
    <source>
        <dbReference type="HAMAP-Rule" id="MF_01599"/>
    </source>
</evidence>
<comment type="function">
    <text evidence="1">Na(+)/H(+) antiporter that extrudes sodium in exchange for external protons.</text>
</comment>
<comment type="catalytic activity">
    <reaction evidence="1">
        <text>2 Na(+)(in) + 3 H(+)(out) = 2 Na(+)(out) + 3 H(+)(in)</text>
        <dbReference type="Rhea" id="RHEA:29247"/>
        <dbReference type="ChEBI" id="CHEBI:15378"/>
        <dbReference type="ChEBI" id="CHEBI:29101"/>
    </reaction>
    <physiologicalReaction direction="left-to-right" evidence="1">
        <dbReference type="Rhea" id="RHEA:29248"/>
    </physiologicalReaction>
</comment>
<comment type="subcellular location">
    <subcellularLocation>
        <location evidence="1">Cell inner membrane</location>
        <topology evidence="1">Multi-pass membrane protein</topology>
    </subcellularLocation>
</comment>
<comment type="similarity">
    <text evidence="1">Belongs to the NhaB Na(+)/H(+) (TC 2.A.34) antiporter family.</text>
</comment>
<feature type="chain" id="PRO_0000333090" description="Na(+)/H(+) antiporter NhaB">
    <location>
        <begin position="1"/>
        <end position="513"/>
    </location>
</feature>
<feature type="transmembrane region" description="Helical" evidence="1">
    <location>
        <begin position="23"/>
        <end position="43"/>
    </location>
</feature>
<feature type="transmembrane region" description="Helical" evidence="1">
    <location>
        <begin position="52"/>
        <end position="72"/>
    </location>
</feature>
<feature type="transmembrane region" description="Helical" evidence="1">
    <location>
        <begin position="97"/>
        <end position="117"/>
    </location>
</feature>
<feature type="transmembrane region" description="Helical" evidence="1">
    <location>
        <begin position="120"/>
        <end position="140"/>
    </location>
</feature>
<feature type="transmembrane region" description="Helical" evidence="1">
    <location>
        <begin position="144"/>
        <end position="164"/>
    </location>
</feature>
<feature type="transmembrane region" description="Helical" evidence="1">
    <location>
        <begin position="202"/>
        <end position="222"/>
    </location>
</feature>
<feature type="transmembrane region" description="Helical" evidence="1">
    <location>
        <begin position="238"/>
        <end position="258"/>
    </location>
</feature>
<feature type="transmembrane region" description="Helical" evidence="1">
    <location>
        <begin position="303"/>
        <end position="323"/>
    </location>
</feature>
<feature type="transmembrane region" description="Helical" evidence="1">
    <location>
        <begin position="348"/>
        <end position="368"/>
    </location>
</feature>
<feature type="transmembrane region" description="Helical" evidence="1">
    <location>
        <begin position="391"/>
        <end position="411"/>
    </location>
</feature>
<feature type="transmembrane region" description="Helical" evidence="1">
    <location>
        <begin position="447"/>
        <end position="467"/>
    </location>
</feature>
<feature type="transmembrane region" description="Helical" evidence="1">
    <location>
        <begin position="475"/>
        <end position="495"/>
    </location>
</feature>
<proteinExistence type="inferred from homology"/>
<sequence length="513" mass="56728">MEISWGRALWRNFLGQSPDWYKLALIIFLIVNPLIFLISPFVAGWLLVAEFIFTLAMALKCYPLLPGGLLAIEAVFIGMTSAEHVREEVAANLEVLLLLMFMVAGIYFMKQLLLFIFTRLLLSIRSKMLLSLSFCVAAAFLSAFLDALTVVAVVISVAVGFYGIYHRVASSRTEDTDLQDDSHIDKHYKVVLEQFRGFLRSLMMHAGVGTALGGVMTMVGEPQNLIIAKAAGWHFGDFFLRMSPVTVPVLICGLLTCLLVEKLRWFGYGETLPEKVREVLQQFDDQSRHQRTRQDKIRLIVQAIIGVWLVTALALHLAEVGLIGLSVIILATSLTGVTDEHAIGKAFTESLPFTALLTVFFSVVAVIIDQQLFSPIIQFVLQASEHAQLSLFYIFNGLLSSISDNVFVGTIYINEAKAAMESGAITLKQYELLAVAINTGTNLPSVATPNGQAAFLFLLTSALAPLIRLSYGRMVWMALPYTLVLTLVGLLCVEFTLAPVTEWFMQMGWIATL</sequence>
<organism>
    <name type="scientific">Escherichia coli O139:H28 (strain E24377A / ETEC)</name>
    <dbReference type="NCBI Taxonomy" id="331111"/>
    <lineage>
        <taxon>Bacteria</taxon>
        <taxon>Pseudomonadati</taxon>
        <taxon>Pseudomonadota</taxon>
        <taxon>Gammaproteobacteria</taxon>
        <taxon>Enterobacterales</taxon>
        <taxon>Enterobacteriaceae</taxon>
        <taxon>Escherichia</taxon>
    </lineage>
</organism>
<dbReference type="EMBL" id="CP000800">
    <property type="protein sequence ID" value="ABV20609.1"/>
    <property type="molecule type" value="Genomic_DNA"/>
</dbReference>
<dbReference type="RefSeq" id="WP_000406391.1">
    <property type="nucleotide sequence ID" value="NC_009801.1"/>
</dbReference>
<dbReference type="SMR" id="A7ZKV7"/>
<dbReference type="GeneID" id="75203299"/>
<dbReference type="KEGG" id="ecw:EcE24377A_1331"/>
<dbReference type="HOGENOM" id="CLU_041110_0_0_6"/>
<dbReference type="Proteomes" id="UP000001122">
    <property type="component" value="Chromosome"/>
</dbReference>
<dbReference type="GO" id="GO:0005886">
    <property type="term" value="C:plasma membrane"/>
    <property type="evidence" value="ECO:0007669"/>
    <property type="project" value="UniProtKB-SubCell"/>
</dbReference>
<dbReference type="GO" id="GO:0015385">
    <property type="term" value="F:sodium:proton antiporter activity"/>
    <property type="evidence" value="ECO:0007669"/>
    <property type="project" value="InterPro"/>
</dbReference>
<dbReference type="HAMAP" id="MF_01599">
    <property type="entry name" value="NhaB"/>
    <property type="match status" value="1"/>
</dbReference>
<dbReference type="InterPro" id="IPR004671">
    <property type="entry name" value="Na+/H+_antiporter_NhaB"/>
</dbReference>
<dbReference type="NCBIfam" id="TIGR00774">
    <property type="entry name" value="NhaB"/>
    <property type="match status" value="1"/>
</dbReference>
<dbReference type="NCBIfam" id="NF007093">
    <property type="entry name" value="PRK09547.1"/>
    <property type="match status" value="1"/>
</dbReference>
<dbReference type="PANTHER" id="PTHR43302:SF1">
    <property type="entry name" value="NA(+)_H(+) ANTIPORTER NHAB"/>
    <property type="match status" value="1"/>
</dbReference>
<dbReference type="PANTHER" id="PTHR43302">
    <property type="entry name" value="TRANSPORTER ARSB-RELATED"/>
    <property type="match status" value="1"/>
</dbReference>
<dbReference type="Pfam" id="PF06450">
    <property type="entry name" value="NhaB"/>
    <property type="match status" value="1"/>
</dbReference>
<gene>
    <name evidence="1" type="primary">nhaB</name>
    <name type="ordered locus">EcE24377A_1331</name>
</gene>